<feature type="chain" id="PRO_1000211798" description="Small ribosomal subunit protein uS19">
    <location>
        <begin position="1"/>
        <end position="92"/>
    </location>
</feature>
<organism>
    <name type="scientific">Corynebacterium kroppenstedtii (strain DSM 44385 / JCM 11950 / CIP 105744 / CCUG 35717)</name>
    <dbReference type="NCBI Taxonomy" id="645127"/>
    <lineage>
        <taxon>Bacteria</taxon>
        <taxon>Bacillati</taxon>
        <taxon>Actinomycetota</taxon>
        <taxon>Actinomycetes</taxon>
        <taxon>Mycobacteriales</taxon>
        <taxon>Corynebacteriaceae</taxon>
        <taxon>Corynebacterium</taxon>
    </lineage>
</organism>
<proteinExistence type="inferred from homology"/>
<name>RS19_CORK4</name>
<reference key="1">
    <citation type="journal article" date="2008" name="J. Biotechnol.">
        <title>Ultrafast pyrosequencing of Corynebacterium kroppenstedtii DSM44385 revealed insights into the physiology of a lipophilic corynebacterium that lacks mycolic acids.</title>
        <authorList>
            <person name="Tauch A."/>
            <person name="Schneider J."/>
            <person name="Szczepanowski R."/>
            <person name="Tilker A."/>
            <person name="Viehoever P."/>
            <person name="Gartemann K.-H."/>
            <person name="Arnold W."/>
            <person name="Blom J."/>
            <person name="Brinkrolf K."/>
            <person name="Brune I."/>
            <person name="Goetker S."/>
            <person name="Weisshaar B."/>
            <person name="Goesmann A."/>
            <person name="Droege M."/>
            <person name="Puehler A."/>
        </authorList>
    </citation>
    <scope>NUCLEOTIDE SEQUENCE [LARGE SCALE GENOMIC DNA]</scope>
    <source>
        <strain>DSM 44385 / JCM 11950 / CIP 105744 / CCUG 35717</strain>
    </source>
</reference>
<comment type="function">
    <text evidence="1">Protein S19 forms a complex with S13 that binds strongly to the 16S ribosomal RNA.</text>
</comment>
<comment type="similarity">
    <text evidence="1">Belongs to the universal ribosomal protein uS19 family.</text>
</comment>
<keyword id="KW-1185">Reference proteome</keyword>
<keyword id="KW-0687">Ribonucleoprotein</keyword>
<keyword id="KW-0689">Ribosomal protein</keyword>
<keyword id="KW-0694">RNA-binding</keyword>
<keyword id="KW-0699">rRNA-binding</keyword>
<protein>
    <recommendedName>
        <fullName evidence="1">Small ribosomal subunit protein uS19</fullName>
    </recommendedName>
    <alternativeName>
        <fullName evidence="2">30S ribosomal protein S19</fullName>
    </alternativeName>
</protein>
<sequence length="92" mass="10449">MPRSLKKGPFVDEHLLSKVDAQNDKGTKQVIKTWSRRSTILPDFIGHTFAVHDGRKHVPVFIDDSMVGHKLGEFAPTKTFKGHVKDDKKGRR</sequence>
<evidence type="ECO:0000255" key="1">
    <source>
        <dbReference type="HAMAP-Rule" id="MF_00531"/>
    </source>
</evidence>
<evidence type="ECO:0000305" key="2"/>
<accession>C4LL48</accession>
<dbReference type="EMBL" id="CP001620">
    <property type="protein sequence ID" value="ACR18553.1"/>
    <property type="molecule type" value="Genomic_DNA"/>
</dbReference>
<dbReference type="RefSeq" id="WP_012732440.1">
    <property type="nucleotide sequence ID" value="NC_012704.1"/>
</dbReference>
<dbReference type="SMR" id="C4LL48"/>
<dbReference type="STRING" id="645127.ckrop_1833"/>
<dbReference type="GeneID" id="92726630"/>
<dbReference type="KEGG" id="ckp:ckrop_1833"/>
<dbReference type="eggNOG" id="COG0185">
    <property type="taxonomic scope" value="Bacteria"/>
</dbReference>
<dbReference type="HOGENOM" id="CLU_144911_0_1_11"/>
<dbReference type="OrthoDB" id="9797833at2"/>
<dbReference type="Proteomes" id="UP000001473">
    <property type="component" value="Chromosome"/>
</dbReference>
<dbReference type="GO" id="GO:0005737">
    <property type="term" value="C:cytoplasm"/>
    <property type="evidence" value="ECO:0007669"/>
    <property type="project" value="UniProtKB-ARBA"/>
</dbReference>
<dbReference type="GO" id="GO:0015935">
    <property type="term" value="C:small ribosomal subunit"/>
    <property type="evidence" value="ECO:0007669"/>
    <property type="project" value="InterPro"/>
</dbReference>
<dbReference type="GO" id="GO:0019843">
    <property type="term" value="F:rRNA binding"/>
    <property type="evidence" value="ECO:0007669"/>
    <property type="project" value="UniProtKB-UniRule"/>
</dbReference>
<dbReference type="GO" id="GO:0003735">
    <property type="term" value="F:structural constituent of ribosome"/>
    <property type="evidence" value="ECO:0007669"/>
    <property type="project" value="InterPro"/>
</dbReference>
<dbReference type="GO" id="GO:0000028">
    <property type="term" value="P:ribosomal small subunit assembly"/>
    <property type="evidence" value="ECO:0007669"/>
    <property type="project" value="TreeGrafter"/>
</dbReference>
<dbReference type="GO" id="GO:0006412">
    <property type="term" value="P:translation"/>
    <property type="evidence" value="ECO:0007669"/>
    <property type="project" value="UniProtKB-UniRule"/>
</dbReference>
<dbReference type="FunFam" id="3.30.860.10:FF:000001">
    <property type="entry name" value="30S ribosomal protein S19"/>
    <property type="match status" value="1"/>
</dbReference>
<dbReference type="Gene3D" id="3.30.860.10">
    <property type="entry name" value="30s Ribosomal Protein S19, Chain A"/>
    <property type="match status" value="1"/>
</dbReference>
<dbReference type="HAMAP" id="MF_00531">
    <property type="entry name" value="Ribosomal_uS19"/>
    <property type="match status" value="1"/>
</dbReference>
<dbReference type="InterPro" id="IPR002222">
    <property type="entry name" value="Ribosomal_uS19"/>
</dbReference>
<dbReference type="InterPro" id="IPR005732">
    <property type="entry name" value="Ribosomal_uS19_bac-type"/>
</dbReference>
<dbReference type="InterPro" id="IPR020934">
    <property type="entry name" value="Ribosomal_uS19_CS"/>
</dbReference>
<dbReference type="InterPro" id="IPR023575">
    <property type="entry name" value="Ribosomal_uS19_SF"/>
</dbReference>
<dbReference type="NCBIfam" id="TIGR01050">
    <property type="entry name" value="rpsS_bact"/>
    <property type="match status" value="1"/>
</dbReference>
<dbReference type="PANTHER" id="PTHR11880">
    <property type="entry name" value="RIBOSOMAL PROTEIN S19P FAMILY MEMBER"/>
    <property type="match status" value="1"/>
</dbReference>
<dbReference type="PANTHER" id="PTHR11880:SF8">
    <property type="entry name" value="SMALL RIBOSOMAL SUBUNIT PROTEIN US19M"/>
    <property type="match status" value="1"/>
</dbReference>
<dbReference type="Pfam" id="PF00203">
    <property type="entry name" value="Ribosomal_S19"/>
    <property type="match status" value="1"/>
</dbReference>
<dbReference type="PIRSF" id="PIRSF002144">
    <property type="entry name" value="Ribosomal_S19"/>
    <property type="match status" value="1"/>
</dbReference>
<dbReference type="PRINTS" id="PR00975">
    <property type="entry name" value="RIBOSOMALS19"/>
</dbReference>
<dbReference type="SUPFAM" id="SSF54570">
    <property type="entry name" value="Ribosomal protein S19"/>
    <property type="match status" value="1"/>
</dbReference>
<dbReference type="PROSITE" id="PS00323">
    <property type="entry name" value="RIBOSOMAL_S19"/>
    <property type="match status" value="1"/>
</dbReference>
<gene>
    <name evidence="1" type="primary">rpsS</name>
    <name type="ordered locus">ckrop_1833</name>
</gene>